<evidence type="ECO:0000255" key="1">
    <source>
        <dbReference type="HAMAP-Rule" id="MF_00210"/>
    </source>
</evidence>
<keyword id="KW-0028">Amino-acid biosynthesis</keyword>
<keyword id="KW-0057">Aromatic amino acid biosynthesis</keyword>
<keyword id="KW-0963">Cytoplasm</keyword>
<keyword id="KW-1185">Reference proteome</keyword>
<keyword id="KW-0808">Transferase</keyword>
<protein>
    <recommendedName>
        <fullName evidence="1">3-phosphoshikimate 1-carboxyvinyltransferase</fullName>
        <ecNumber evidence="1">2.5.1.19</ecNumber>
    </recommendedName>
    <alternativeName>
        <fullName evidence="1">5-enolpyruvylshikimate-3-phosphate synthase</fullName>
        <shortName evidence="1">EPSP synthase</shortName>
        <shortName evidence="1">EPSPS</shortName>
    </alternativeName>
</protein>
<name>AROA_SACEN</name>
<dbReference type="EC" id="2.5.1.19" evidence="1"/>
<dbReference type="EMBL" id="AM420293">
    <property type="protein sequence ID" value="CAM05605.1"/>
    <property type="molecule type" value="Genomic_DNA"/>
</dbReference>
<dbReference type="RefSeq" id="WP_009949673.1">
    <property type="nucleotide sequence ID" value="NC_009142.1"/>
</dbReference>
<dbReference type="SMR" id="A4FNI0"/>
<dbReference type="STRING" id="405948.SACE_6435"/>
<dbReference type="KEGG" id="sen:SACE_6435"/>
<dbReference type="eggNOG" id="COG0128">
    <property type="taxonomic scope" value="Bacteria"/>
</dbReference>
<dbReference type="HOGENOM" id="CLU_024321_0_0_11"/>
<dbReference type="OrthoDB" id="9809920at2"/>
<dbReference type="UniPathway" id="UPA00053">
    <property type="reaction ID" value="UER00089"/>
</dbReference>
<dbReference type="Proteomes" id="UP000006728">
    <property type="component" value="Chromosome"/>
</dbReference>
<dbReference type="GO" id="GO:0005737">
    <property type="term" value="C:cytoplasm"/>
    <property type="evidence" value="ECO:0007669"/>
    <property type="project" value="UniProtKB-SubCell"/>
</dbReference>
<dbReference type="GO" id="GO:0003866">
    <property type="term" value="F:3-phosphoshikimate 1-carboxyvinyltransferase activity"/>
    <property type="evidence" value="ECO:0007669"/>
    <property type="project" value="UniProtKB-UniRule"/>
</dbReference>
<dbReference type="GO" id="GO:0008652">
    <property type="term" value="P:amino acid biosynthetic process"/>
    <property type="evidence" value="ECO:0007669"/>
    <property type="project" value="UniProtKB-KW"/>
</dbReference>
<dbReference type="GO" id="GO:0009073">
    <property type="term" value="P:aromatic amino acid family biosynthetic process"/>
    <property type="evidence" value="ECO:0007669"/>
    <property type="project" value="UniProtKB-KW"/>
</dbReference>
<dbReference type="GO" id="GO:0009423">
    <property type="term" value="P:chorismate biosynthetic process"/>
    <property type="evidence" value="ECO:0007669"/>
    <property type="project" value="UniProtKB-UniRule"/>
</dbReference>
<dbReference type="CDD" id="cd01556">
    <property type="entry name" value="EPSP_synthase"/>
    <property type="match status" value="1"/>
</dbReference>
<dbReference type="FunFam" id="3.65.10.10:FF:000010">
    <property type="entry name" value="3-phosphoshikimate 1-carboxyvinyltransferase"/>
    <property type="match status" value="1"/>
</dbReference>
<dbReference type="FunFam" id="3.65.10.10:FF:000011">
    <property type="entry name" value="3-phosphoshikimate 1-carboxyvinyltransferase"/>
    <property type="match status" value="1"/>
</dbReference>
<dbReference type="Gene3D" id="3.65.10.10">
    <property type="entry name" value="Enolpyruvate transferase domain"/>
    <property type="match status" value="2"/>
</dbReference>
<dbReference type="HAMAP" id="MF_00210">
    <property type="entry name" value="EPSP_synth"/>
    <property type="match status" value="1"/>
</dbReference>
<dbReference type="InterPro" id="IPR001986">
    <property type="entry name" value="Enolpyruvate_Tfrase_dom"/>
</dbReference>
<dbReference type="InterPro" id="IPR036968">
    <property type="entry name" value="Enolpyruvate_Tfrase_sf"/>
</dbReference>
<dbReference type="InterPro" id="IPR006264">
    <property type="entry name" value="EPSP_synthase"/>
</dbReference>
<dbReference type="InterPro" id="IPR023193">
    <property type="entry name" value="EPSP_synthase_CS"/>
</dbReference>
<dbReference type="InterPro" id="IPR013792">
    <property type="entry name" value="RNA3'P_cycl/enolpyr_Trfase_a/b"/>
</dbReference>
<dbReference type="NCBIfam" id="TIGR01356">
    <property type="entry name" value="aroA"/>
    <property type="match status" value="1"/>
</dbReference>
<dbReference type="PANTHER" id="PTHR21090">
    <property type="entry name" value="AROM/DEHYDROQUINATE SYNTHASE"/>
    <property type="match status" value="1"/>
</dbReference>
<dbReference type="PANTHER" id="PTHR21090:SF5">
    <property type="entry name" value="PENTAFUNCTIONAL AROM POLYPEPTIDE"/>
    <property type="match status" value="1"/>
</dbReference>
<dbReference type="Pfam" id="PF00275">
    <property type="entry name" value="EPSP_synthase"/>
    <property type="match status" value="1"/>
</dbReference>
<dbReference type="PIRSF" id="PIRSF000505">
    <property type="entry name" value="EPSPS"/>
    <property type="match status" value="1"/>
</dbReference>
<dbReference type="SUPFAM" id="SSF55205">
    <property type="entry name" value="EPT/RTPC-like"/>
    <property type="match status" value="1"/>
</dbReference>
<dbReference type="PROSITE" id="PS00104">
    <property type="entry name" value="EPSP_SYNTHASE_1"/>
    <property type="match status" value="1"/>
</dbReference>
<dbReference type="PROSITE" id="PS00885">
    <property type="entry name" value="EPSP_SYNTHASE_2"/>
    <property type="match status" value="1"/>
</dbReference>
<comment type="function">
    <text evidence="1">Catalyzes the transfer of the enolpyruvyl moiety of phosphoenolpyruvate (PEP) to the 5-hydroxyl of shikimate-3-phosphate (S3P) to produce enolpyruvyl shikimate-3-phosphate and inorganic phosphate.</text>
</comment>
<comment type="catalytic activity">
    <reaction evidence="1">
        <text>3-phosphoshikimate + phosphoenolpyruvate = 5-O-(1-carboxyvinyl)-3-phosphoshikimate + phosphate</text>
        <dbReference type="Rhea" id="RHEA:21256"/>
        <dbReference type="ChEBI" id="CHEBI:43474"/>
        <dbReference type="ChEBI" id="CHEBI:57701"/>
        <dbReference type="ChEBI" id="CHEBI:58702"/>
        <dbReference type="ChEBI" id="CHEBI:145989"/>
        <dbReference type="EC" id="2.5.1.19"/>
    </reaction>
    <physiologicalReaction direction="left-to-right" evidence="1">
        <dbReference type="Rhea" id="RHEA:21257"/>
    </physiologicalReaction>
</comment>
<comment type="pathway">
    <text evidence="1">Metabolic intermediate biosynthesis; chorismate biosynthesis; chorismate from D-erythrose 4-phosphate and phosphoenolpyruvate: step 6/7.</text>
</comment>
<comment type="subunit">
    <text evidence="1">Monomer.</text>
</comment>
<comment type="subcellular location">
    <subcellularLocation>
        <location evidence="1">Cytoplasm</location>
    </subcellularLocation>
</comment>
<comment type="similarity">
    <text evidence="1">Belongs to the EPSP synthase family.</text>
</comment>
<accession>A4FNI0</accession>
<gene>
    <name evidence="1" type="primary">aroA</name>
    <name type="ordered locus">SACE_6435</name>
</gene>
<reference key="1">
    <citation type="journal article" date="2007" name="Nat. Biotechnol.">
        <title>Complete genome sequence of the erythromycin-producing bacterium Saccharopolyspora erythraea NRRL23338.</title>
        <authorList>
            <person name="Oliynyk M."/>
            <person name="Samborskyy M."/>
            <person name="Lester J.B."/>
            <person name="Mironenko T."/>
            <person name="Scott N."/>
            <person name="Dickens S."/>
            <person name="Haydock S.F."/>
            <person name="Leadlay P.F."/>
        </authorList>
    </citation>
    <scope>NUCLEOTIDE SEQUENCE [LARGE SCALE GENOMIC DNA]</scope>
    <source>
        <strain>ATCC 11635 / DSM 40517 / JCM 4748 / NBRC 13426 / NCIMB 8594 / NRRL 2338</strain>
    </source>
</reference>
<proteinExistence type="inferred from homology"/>
<organism>
    <name type="scientific">Saccharopolyspora erythraea (strain ATCC 11635 / DSM 40517 / JCM 4748 / NBRC 13426 / NCIMB 8594 / NRRL 2338)</name>
    <dbReference type="NCBI Taxonomy" id="405948"/>
    <lineage>
        <taxon>Bacteria</taxon>
        <taxon>Bacillati</taxon>
        <taxon>Actinomycetota</taxon>
        <taxon>Actinomycetes</taxon>
        <taxon>Pseudonocardiales</taxon>
        <taxon>Pseudonocardiaceae</taxon>
        <taxon>Saccharopolyspora</taxon>
    </lineage>
</organism>
<feature type="chain" id="PRO_0000325381" description="3-phosphoshikimate 1-carboxyvinyltransferase">
    <location>
        <begin position="1"/>
        <end position="422"/>
    </location>
</feature>
<feature type="active site" description="Proton acceptor" evidence="1">
    <location>
        <position position="308"/>
    </location>
</feature>
<feature type="binding site" evidence="1">
    <location>
        <position position="24"/>
    </location>
    <ligand>
        <name>3-phosphoshikimate</name>
        <dbReference type="ChEBI" id="CHEBI:145989"/>
    </ligand>
</feature>
<feature type="binding site" evidence="1">
    <location>
        <position position="24"/>
    </location>
    <ligand>
        <name>phosphoenolpyruvate</name>
        <dbReference type="ChEBI" id="CHEBI:58702"/>
    </ligand>
</feature>
<feature type="binding site" evidence="1">
    <location>
        <position position="25"/>
    </location>
    <ligand>
        <name>3-phosphoshikimate</name>
        <dbReference type="ChEBI" id="CHEBI:145989"/>
    </ligand>
</feature>
<feature type="binding site" evidence="1">
    <location>
        <position position="29"/>
    </location>
    <ligand>
        <name>3-phosphoshikimate</name>
        <dbReference type="ChEBI" id="CHEBI:145989"/>
    </ligand>
</feature>
<feature type="binding site" evidence="1">
    <location>
        <position position="93"/>
    </location>
    <ligand>
        <name>phosphoenolpyruvate</name>
        <dbReference type="ChEBI" id="CHEBI:58702"/>
    </ligand>
</feature>
<feature type="binding site" evidence="1">
    <location>
        <position position="121"/>
    </location>
    <ligand>
        <name>phosphoenolpyruvate</name>
        <dbReference type="ChEBI" id="CHEBI:58702"/>
    </ligand>
</feature>
<feature type="binding site" evidence="1">
    <location>
        <position position="164"/>
    </location>
    <ligand>
        <name>3-phosphoshikimate</name>
        <dbReference type="ChEBI" id="CHEBI:145989"/>
    </ligand>
</feature>
<feature type="binding site" evidence="1">
    <location>
        <position position="165"/>
    </location>
    <ligand>
        <name>3-phosphoshikimate</name>
        <dbReference type="ChEBI" id="CHEBI:145989"/>
    </ligand>
</feature>
<feature type="binding site" evidence="1">
    <location>
        <position position="166"/>
    </location>
    <ligand>
        <name>3-phosphoshikimate</name>
        <dbReference type="ChEBI" id="CHEBI:145989"/>
    </ligand>
</feature>
<feature type="binding site" evidence="1">
    <location>
        <position position="166"/>
    </location>
    <ligand>
        <name>phosphoenolpyruvate</name>
        <dbReference type="ChEBI" id="CHEBI:58702"/>
    </ligand>
</feature>
<feature type="binding site" evidence="1">
    <location>
        <position position="308"/>
    </location>
    <ligand>
        <name>3-phosphoshikimate</name>
        <dbReference type="ChEBI" id="CHEBI:145989"/>
    </ligand>
</feature>
<feature type="binding site" evidence="1">
    <location>
        <position position="335"/>
    </location>
    <ligand>
        <name>3-phosphoshikimate</name>
        <dbReference type="ChEBI" id="CHEBI:145989"/>
    </ligand>
</feature>
<feature type="binding site" evidence="1">
    <location>
        <position position="339"/>
    </location>
    <ligand>
        <name>phosphoenolpyruvate</name>
        <dbReference type="ChEBI" id="CHEBI:58702"/>
    </ligand>
</feature>
<feature type="binding site" evidence="1">
    <location>
        <position position="380"/>
    </location>
    <ligand>
        <name>phosphoenolpyruvate</name>
        <dbReference type="ChEBI" id="CHEBI:58702"/>
    </ligand>
</feature>
<feature type="binding site" evidence="1">
    <location>
        <position position="405"/>
    </location>
    <ligand>
        <name>phosphoenolpyruvate</name>
        <dbReference type="ChEBI" id="CHEBI:58702"/>
    </ligand>
</feature>
<sequence>MTQFWPAPAASGAVRATVPVPGSKSITNRALVLAALAEGPSTLRGPLRSRDTELMATALRALGADLQDGPEGSWQVAPGPLRGPAEVDCGLAGTVMRFLPPVAALAEGRITFDGDPRARERPLDAVLNALRALGADISGDSLPFELQGTGKLAGGAVTIDASASSQFVSGLLLSAPRFEQGVTVTHTGEPVPSLPHIDMTVSMLRAAGVEVDDSKRDVWHVAPGPIRALDLDVEPDLSNATPFLAAAAVTGGTVTVPGWPERTDQAGDAIRDILARMGATVELGPDGLTVTGPAELAPLDIDLHDVGELTPTVAALAAFASGRSRLRGVAHLRGHETDRLAALQRELSGLGGDVEQTDDGLLIEPRPLTGGNWHSYADHRMATAGAILGLLVPGVLVEDIATTRKTIPDFPGMWSSMLGAVD</sequence>